<evidence type="ECO:0000255" key="1"/>
<evidence type="ECO:0000255" key="2">
    <source>
        <dbReference type="PROSITE-ProRule" id="PRU00521"/>
    </source>
</evidence>
<evidence type="ECO:0000305" key="3"/>
<evidence type="ECO:0000312" key="4">
    <source>
        <dbReference type="MGI" id="MGI:3030832"/>
    </source>
</evidence>
<feature type="chain" id="PRO_0000150857" description="Olfactory receptor 5G29">
    <location>
        <begin position="1"/>
        <end position="314"/>
    </location>
</feature>
<feature type="topological domain" description="Extracellular" evidence="1">
    <location>
        <begin position="1"/>
        <end position="25"/>
    </location>
</feature>
<feature type="transmembrane region" description="Helical; Name=1" evidence="1">
    <location>
        <begin position="26"/>
        <end position="46"/>
    </location>
</feature>
<feature type="topological domain" description="Cytoplasmic" evidence="1">
    <location>
        <begin position="47"/>
        <end position="54"/>
    </location>
</feature>
<feature type="transmembrane region" description="Helical; Name=2" evidence="1">
    <location>
        <begin position="55"/>
        <end position="75"/>
    </location>
</feature>
<feature type="topological domain" description="Extracellular" evidence="1">
    <location>
        <begin position="76"/>
        <end position="99"/>
    </location>
</feature>
<feature type="transmembrane region" description="Helical; Name=3" evidence="1">
    <location>
        <begin position="100"/>
        <end position="120"/>
    </location>
</feature>
<feature type="topological domain" description="Cytoplasmic" evidence="1">
    <location>
        <begin position="121"/>
        <end position="133"/>
    </location>
</feature>
<feature type="transmembrane region" description="Helical; Name=4" evidence="1">
    <location>
        <begin position="134"/>
        <end position="154"/>
    </location>
</feature>
<feature type="topological domain" description="Extracellular" evidence="1">
    <location>
        <begin position="155"/>
        <end position="196"/>
    </location>
</feature>
<feature type="transmembrane region" description="Helical; Name=5" evidence="1">
    <location>
        <begin position="197"/>
        <end position="217"/>
    </location>
</feature>
<feature type="topological domain" description="Cytoplasmic" evidence="1">
    <location>
        <begin position="218"/>
        <end position="237"/>
    </location>
</feature>
<feature type="transmembrane region" description="Helical; Name=6" evidence="1">
    <location>
        <begin position="238"/>
        <end position="258"/>
    </location>
</feature>
<feature type="topological domain" description="Extracellular" evidence="1">
    <location>
        <begin position="259"/>
        <end position="271"/>
    </location>
</feature>
<feature type="transmembrane region" description="Helical; Name=7" evidence="1">
    <location>
        <begin position="272"/>
        <end position="292"/>
    </location>
</feature>
<feature type="topological domain" description="Cytoplasmic" evidence="1">
    <location>
        <begin position="293"/>
        <end position="312"/>
    </location>
</feature>
<feature type="glycosylation site" description="N-linked (GlcNAc...) asparagine" evidence="1">
    <location>
        <position position="5"/>
    </location>
</feature>
<feature type="disulfide bond" evidence="2">
    <location>
        <begin position="97"/>
        <end position="189"/>
    </location>
</feature>
<feature type="sequence conflict" description="In Ref. 1; AAL61325 and 2; AAP71455." evidence="3" ref="1 2">
    <original>S</original>
    <variation>A</variation>
    <location>
        <position position="246"/>
    </location>
</feature>
<dbReference type="EMBL" id="AY073662">
    <property type="protein sequence ID" value="AAL61325.1"/>
    <property type="molecule type" value="Genomic_DNA"/>
</dbReference>
<dbReference type="EMBL" id="AY318192">
    <property type="protein sequence ID" value="AAP71455.1"/>
    <property type="molecule type" value="Genomic_DNA"/>
</dbReference>
<dbReference type="EMBL" id="AL773585">
    <property type="status" value="NOT_ANNOTATED_CDS"/>
    <property type="molecule type" value="Genomic_DNA"/>
</dbReference>
<dbReference type="CCDS" id="CCDS16210.1"/>
<dbReference type="RefSeq" id="NP_666647.2">
    <property type="nucleotide sequence ID" value="NM_146436.2"/>
</dbReference>
<dbReference type="SMR" id="Q8VF76"/>
<dbReference type="FunCoup" id="Q8VF76">
    <property type="interactions" value="1181"/>
</dbReference>
<dbReference type="STRING" id="10090.ENSMUSP00000150713"/>
<dbReference type="GlyCosmos" id="Q8VF76">
    <property type="glycosylation" value="1 site, No reported glycans"/>
</dbReference>
<dbReference type="GlyGen" id="Q8VF76">
    <property type="glycosylation" value="1 site"/>
</dbReference>
<dbReference type="PaxDb" id="10090-ENSMUSP00000059970"/>
<dbReference type="Ensembl" id="ENSMUST00000052307.5">
    <property type="protein sequence ID" value="ENSMUSP00000059970.3"/>
    <property type="gene ID" value="ENSMUSG00000111454.3"/>
</dbReference>
<dbReference type="Ensembl" id="ENSMUST00000215083.3">
    <property type="protein sequence ID" value="ENSMUSP00000150713.2"/>
    <property type="gene ID" value="ENSMUSG00000111454.3"/>
</dbReference>
<dbReference type="GeneID" id="258428"/>
<dbReference type="KEGG" id="mmu:258428"/>
<dbReference type="UCSC" id="uc008kkl.2">
    <property type="organism name" value="mouse"/>
</dbReference>
<dbReference type="AGR" id="MGI:3030832"/>
<dbReference type="CTD" id="258428"/>
<dbReference type="MGI" id="MGI:3030832">
    <property type="gene designation" value="Or5g29"/>
</dbReference>
<dbReference type="VEuPathDB" id="HostDB:ENSMUSG00000111454"/>
<dbReference type="eggNOG" id="ENOG502RF13">
    <property type="taxonomic scope" value="Eukaryota"/>
</dbReference>
<dbReference type="GeneTree" id="ENSGT01120000271831"/>
<dbReference type="HOGENOM" id="CLU_012526_1_0_1"/>
<dbReference type="InParanoid" id="Q8VF76"/>
<dbReference type="OMA" id="FSTKFER"/>
<dbReference type="OrthoDB" id="9443097at2759"/>
<dbReference type="PhylomeDB" id="Q8VF76"/>
<dbReference type="TreeFam" id="TF352753"/>
<dbReference type="BioGRID-ORCS" id="258428">
    <property type="hits" value="4 hits in 70 CRISPR screens"/>
</dbReference>
<dbReference type="PRO" id="PR:Q8VF76"/>
<dbReference type="Proteomes" id="UP000000589">
    <property type="component" value="Chromosome 2"/>
</dbReference>
<dbReference type="RNAct" id="Q8VF76">
    <property type="molecule type" value="protein"/>
</dbReference>
<dbReference type="GO" id="GO:0016020">
    <property type="term" value="C:membrane"/>
    <property type="evidence" value="ECO:0000247"/>
    <property type="project" value="MGI"/>
</dbReference>
<dbReference type="GO" id="GO:0005886">
    <property type="term" value="C:plasma membrane"/>
    <property type="evidence" value="ECO:0007669"/>
    <property type="project" value="UniProtKB-SubCell"/>
</dbReference>
<dbReference type="GO" id="GO:0004930">
    <property type="term" value="F:G protein-coupled receptor activity"/>
    <property type="evidence" value="ECO:0007669"/>
    <property type="project" value="UniProtKB-KW"/>
</dbReference>
<dbReference type="GO" id="GO:0004984">
    <property type="term" value="F:olfactory receptor activity"/>
    <property type="evidence" value="ECO:0000247"/>
    <property type="project" value="MGI"/>
</dbReference>
<dbReference type="GO" id="GO:0007186">
    <property type="term" value="P:G protein-coupled receptor signaling pathway"/>
    <property type="evidence" value="ECO:0000247"/>
    <property type="project" value="MGI"/>
</dbReference>
<dbReference type="GO" id="GO:0007608">
    <property type="term" value="P:sensory perception of smell"/>
    <property type="evidence" value="ECO:0000247"/>
    <property type="project" value="MGI"/>
</dbReference>
<dbReference type="CDD" id="cd15414">
    <property type="entry name" value="7tmA_OR5G-like"/>
    <property type="match status" value="1"/>
</dbReference>
<dbReference type="FunFam" id="1.20.1070.10:FF:000003">
    <property type="entry name" value="Olfactory receptor"/>
    <property type="match status" value="1"/>
</dbReference>
<dbReference type="Gene3D" id="1.20.1070.10">
    <property type="entry name" value="Rhodopsin 7-helix transmembrane proteins"/>
    <property type="match status" value="1"/>
</dbReference>
<dbReference type="InterPro" id="IPR000276">
    <property type="entry name" value="GPCR_Rhodpsn"/>
</dbReference>
<dbReference type="InterPro" id="IPR017452">
    <property type="entry name" value="GPCR_Rhodpsn_7TM"/>
</dbReference>
<dbReference type="InterPro" id="IPR000725">
    <property type="entry name" value="Olfact_rcpt"/>
</dbReference>
<dbReference type="PANTHER" id="PTHR48018">
    <property type="entry name" value="OLFACTORY RECEPTOR"/>
    <property type="match status" value="1"/>
</dbReference>
<dbReference type="Pfam" id="PF13853">
    <property type="entry name" value="7tm_4"/>
    <property type="match status" value="1"/>
</dbReference>
<dbReference type="PRINTS" id="PR00237">
    <property type="entry name" value="GPCRRHODOPSN"/>
</dbReference>
<dbReference type="PRINTS" id="PR00245">
    <property type="entry name" value="OLFACTORYR"/>
</dbReference>
<dbReference type="SUPFAM" id="SSF81321">
    <property type="entry name" value="Family A G protein-coupled receptor-like"/>
    <property type="match status" value="1"/>
</dbReference>
<dbReference type="PROSITE" id="PS00237">
    <property type="entry name" value="G_PROTEIN_RECEP_F1_1"/>
    <property type="match status" value="1"/>
</dbReference>
<dbReference type="PROSITE" id="PS50262">
    <property type="entry name" value="G_PROTEIN_RECEP_F1_2"/>
    <property type="match status" value="1"/>
</dbReference>
<proteinExistence type="inferred from homology"/>
<sequence>MEEKNQTIVMEFFFLGLTDHLYQKIALFITILFVYLVTLGGNLGMITLIWADPRLHTPMYFFLSHLSFVDMCSSSSIAPKMLCDIFAEEKRISFMGCAAQMWFFGFFVGTECFLLASMAYDRYTAICKPLLYTLLMSQRVCVHLVVGPYVFAIINITTHTTLAFCLPFCGSNTINHFFCDVSPLLSLACADSWVNKVVLFVLSGAIGVFSGLIIIVSYVSILMTIFKIQTADGKQKAFSTCSSHLSAVSILYGTLFFIYVRPSASFSLNINKMISLFYTVVIPMLNPLIYSLRNKEVKGAFRRKVQKKHFPAGR</sequence>
<keyword id="KW-1003">Cell membrane</keyword>
<keyword id="KW-1015">Disulfide bond</keyword>
<keyword id="KW-0297">G-protein coupled receptor</keyword>
<keyword id="KW-0325">Glycoprotein</keyword>
<keyword id="KW-0472">Membrane</keyword>
<keyword id="KW-0552">Olfaction</keyword>
<keyword id="KW-0675">Receptor</keyword>
<keyword id="KW-1185">Reference proteome</keyword>
<keyword id="KW-0716">Sensory transduction</keyword>
<keyword id="KW-0807">Transducer</keyword>
<keyword id="KW-0812">Transmembrane</keyword>
<keyword id="KW-1133">Transmembrane helix</keyword>
<accession>Q8VF76</accession>
<accession>A2ALC8</accession>
<reference key="1">
    <citation type="journal article" date="2002" name="Nat. Neurosci.">
        <title>The olfactory receptor gene superfamily of the mouse.</title>
        <authorList>
            <person name="Zhang X."/>
            <person name="Firestein S."/>
        </authorList>
    </citation>
    <scope>NUCLEOTIDE SEQUENCE [GENOMIC DNA]</scope>
</reference>
<reference key="2">
    <citation type="journal article" date="2002" name="Hum. Mol. Genet.">
        <title>Different evolutionary processes shaped the mouse and human olfactory receptor gene families.</title>
        <authorList>
            <person name="Young J.M."/>
            <person name="Friedman C."/>
            <person name="Williams E.M."/>
            <person name="Ross J.A."/>
            <person name="Tonnes-Priddy L."/>
            <person name="Trask B.J."/>
        </authorList>
    </citation>
    <scope>NUCLEOTIDE SEQUENCE [GENOMIC DNA]</scope>
</reference>
<reference key="3">
    <citation type="journal article" date="2002" name="Hum. Mol. Genet.">
        <authorList>
            <person name="Young J.M."/>
            <person name="Friedman C."/>
            <person name="Williams E.M."/>
            <person name="Ross J.A."/>
            <person name="Tonnes-Priddy L."/>
            <person name="Trask B.J."/>
        </authorList>
    </citation>
    <scope>ERRATUM OF PUBMED:11875048</scope>
</reference>
<reference key="4">
    <citation type="journal article" date="2009" name="PLoS Biol.">
        <title>Lineage-specific biology revealed by a finished genome assembly of the mouse.</title>
        <authorList>
            <person name="Church D.M."/>
            <person name="Goodstadt L."/>
            <person name="Hillier L.W."/>
            <person name="Zody M.C."/>
            <person name="Goldstein S."/>
            <person name="She X."/>
            <person name="Bult C.J."/>
            <person name="Agarwala R."/>
            <person name="Cherry J.L."/>
            <person name="DiCuccio M."/>
            <person name="Hlavina W."/>
            <person name="Kapustin Y."/>
            <person name="Meric P."/>
            <person name="Maglott D."/>
            <person name="Birtle Z."/>
            <person name="Marques A.C."/>
            <person name="Graves T."/>
            <person name="Zhou S."/>
            <person name="Teague B."/>
            <person name="Potamousis K."/>
            <person name="Churas C."/>
            <person name="Place M."/>
            <person name="Herschleb J."/>
            <person name="Runnheim R."/>
            <person name="Forrest D."/>
            <person name="Amos-Landgraf J."/>
            <person name="Schwartz D.C."/>
            <person name="Cheng Z."/>
            <person name="Lindblad-Toh K."/>
            <person name="Eichler E.E."/>
            <person name="Ponting C.P."/>
        </authorList>
    </citation>
    <scope>NUCLEOTIDE SEQUENCE [LARGE SCALE GENOMIC DNA]</scope>
    <source>
        <strain>C57BL/6J</strain>
    </source>
</reference>
<gene>
    <name evidence="4" type="primary">Or5g29</name>
    <name evidence="4" type="synonym">Mor175-5</name>
    <name evidence="4" type="synonym">Olfr998</name>
</gene>
<organism>
    <name type="scientific">Mus musculus</name>
    <name type="common">Mouse</name>
    <dbReference type="NCBI Taxonomy" id="10090"/>
    <lineage>
        <taxon>Eukaryota</taxon>
        <taxon>Metazoa</taxon>
        <taxon>Chordata</taxon>
        <taxon>Craniata</taxon>
        <taxon>Vertebrata</taxon>
        <taxon>Euteleostomi</taxon>
        <taxon>Mammalia</taxon>
        <taxon>Eutheria</taxon>
        <taxon>Euarchontoglires</taxon>
        <taxon>Glires</taxon>
        <taxon>Rodentia</taxon>
        <taxon>Myomorpha</taxon>
        <taxon>Muroidea</taxon>
        <taxon>Muridae</taxon>
        <taxon>Murinae</taxon>
        <taxon>Mus</taxon>
        <taxon>Mus</taxon>
    </lineage>
</organism>
<comment type="function">
    <text>Potential odorant receptor.</text>
</comment>
<comment type="subcellular location">
    <subcellularLocation>
        <location evidence="3">Cell membrane</location>
        <topology evidence="1">Multi-pass membrane protein</topology>
    </subcellularLocation>
</comment>
<comment type="similarity">
    <text evidence="2">Belongs to the G-protein coupled receptor 1 family.</text>
</comment>
<name>O5G29_MOUSE</name>
<protein>
    <recommendedName>
        <fullName evidence="3">Olfactory receptor 5G29</fullName>
    </recommendedName>
    <alternativeName>
        <fullName>Olfactory receptor 175-5</fullName>
    </alternativeName>
    <alternativeName>
        <fullName>Olfactory receptor 998</fullName>
    </alternativeName>
</protein>